<name>AQPZ_BRUAB</name>
<dbReference type="EMBL" id="AE017223">
    <property type="protein sequence ID" value="AAX75280.1"/>
    <property type="molecule type" value="Genomic_DNA"/>
</dbReference>
<dbReference type="RefSeq" id="WP_002967012.1">
    <property type="nucleotide sequence ID" value="NC_006932.1"/>
</dbReference>
<dbReference type="SMR" id="P0C112"/>
<dbReference type="EnsemblBacteria" id="AAX75280">
    <property type="protein sequence ID" value="AAX75280"/>
    <property type="gene ID" value="BruAb1_1976"/>
</dbReference>
<dbReference type="GeneID" id="93017681"/>
<dbReference type="KEGG" id="bmb:BruAb1_1976"/>
<dbReference type="HOGENOM" id="CLU_020019_3_2_5"/>
<dbReference type="Proteomes" id="UP000000540">
    <property type="component" value="Chromosome I"/>
</dbReference>
<dbReference type="GO" id="GO:0005886">
    <property type="term" value="C:plasma membrane"/>
    <property type="evidence" value="ECO:0007669"/>
    <property type="project" value="UniProtKB-SubCell"/>
</dbReference>
<dbReference type="GO" id="GO:0015250">
    <property type="term" value="F:water channel activity"/>
    <property type="evidence" value="ECO:0007669"/>
    <property type="project" value="UniProtKB-UniRule"/>
</dbReference>
<dbReference type="CDD" id="cd00333">
    <property type="entry name" value="MIP"/>
    <property type="match status" value="1"/>
</dbReference>
<dbReference type="FunFam" id="1.20.1080.10:FF:000007">
    <property type="entry name" value="Aquaporin Z"/>
    <property type="match status" value="1"/>
</dbReference>
<dbReference type="Gene3D" id="1.20.1080.10">
    <property type="entry name" value="Glycerol uptake facilitator protein"/>
    <property type="match status" value="1"/>
</dbReference>
<dbReference type="HAMAP" id="MF_01146">
    <property type="entry name" value="Aquaporin_Z"/>
    <property type="match status" value="1"/>
</dbReference>
<dbReference type="InterPro" id="IPR023271">
    <property type="entry name" value="Aquaporin-like"/>
</dbReference>
<dbReference type="InterPro" id="IPR034294">
    <property type="entry name" value="Aquaporin_transptr"/>
</dbReference>
<dbReference type="InterPro" id="IPR023743">
    <property type="entry name" value="Aquaporin_Z"/>
</dbReference>
<dbReference type="InterPro" id="IPR000425">
    <property type="entry name" value="MIP"/>
</dbReference>
<dbReference type="InterPro" id="IPR022357">
    <property type="entry name" value="MIP_CS"/>
</dbReference>
<dbReference type="NCBIfam" id="TIGR00861">
    <property type="entry name" value="MIP"/>
    <property type="match status" value="1"/>
</dbReference>
<dbReference type="NCBIfam" id="NF003838">
    <property type="entry name" value="PRK05420.1"/>
    <property type="match status" value="1"/>
</dbReference>
<dbReference type="PANTHER" id="PTHR19139">
    <property type="entry name" value="AQUAPORIN TRANSPORTER"/>
    <property type="match status" value="1"/>
</dbReference>
<dbReference type="PANTHER" id="PTHR19139:SF199">
    <property type="entry name" value="MIP17260P"/>
    <property type="match status" value="1"/>
</dbReference>
<dbReference type="Pfam" id="PF00230">
    <property type="entry name" value="MIP"/>
    <property type="match status" value="1"/>
</dbReference>
<dbReference type="PRINTS" id="PR00783">
    <property type="entry name" value="MINTRINSICP"/>
</dbReference>
<dbReference type="SUPFAM" id="SSF81338">
    <property type="entry name" value="Aquaporin-like"/>
    <property type="match status" value="1"/>
</dbReference>
<dbReference type="PROSITE" id="PS00221">
    <property type="entry name" value="MIP"/>
    <property type="match status" value="1"/>
</dbReference>
<reference key="1">
    <citation type="journal article" date="2005" name="J. Bacteriol.">
        <title>Completion of the genome sequence of Brucella abortus and comparison to the highly similar genomes of Brucella melitensis and Brucella suis.</title>
        <authorList>
            <person name="Halling S.M."/>
            <person name="Peterson-Burch B.D."/>
            <person name="Bricker B.J."/>
            <person name="Zuerner R.L."/>
            <person name="Qing Z."/>
            <person name="Li L.-L."/>
            <person name="Kapur V."/>
            <person name="Alt D.P."/>
            <person name="Olsen S.C."/>
        </authorList>
    </citation>
    <scope>NUCLEOTIDE SEQUENCE [LARGE SCALE GENOMIC DNA]</scope>
    <source>
        <strain>9-941</strain>
    </source>
</reference>
<protein>
    <recommendedName>
        <fullName evidence="1">Aquaporin Z</fullName>
    </recommendedName>
    <alternativeName>
        <fullName>Aquaporin X</fullName>
    </alternativeName>
</protein>
<feature type="chain" id="PRO_0000063983" description="Aquaporin Z">
    <location>
        <begin position="1"/>
        <end position="228"/>
    </location>
</feature>
<feature type="transmembrane region" description="Helical" evidence="1">
    <location>
        <begin position="1"/>
        <end position="21"/>
    </location>
</feature>
<feature type="transmembrane region" description="Helical" evidence="1">
    <location>
        <begin position="23"/>
        <end position="43"/>
    </location>
</feature>
<feature type="transmembrane region" description="Helical" evidence="1">
    <location>
        <begin position="82"/>
        <end position="102"/>
    </location>
</feature>
<feature type="transmembrane region" description="Helical" evidence="1">
    <location>
        <begin position="129"/>
        <end position="149"/>
    </location>
</feature>
<feature type="transmembrane region" description="Helical" evidence="1">
    <location>
        <begin position="154"/>
        <end position="174"/>
    </location>
</feature>
<feature type="transmembrane region" description="Helical" evidence="1">
    <location>
        <begin position="205"/>
        <end position="225"/>
    </location>
</feature>
<feature type="short sequence motif" description="NPA 1" evidence="1">
    <location>
        <begin position="63"/>
        <end position="65"/>
    </location>
</feature>
<feature type="short sequence motif" description="NPA 2" evidence="1">
    <location>
        <begin position="184"/>
        <end position="186"/>
    </location>
</feature>
<feature type="site" description="Involved in tetramerization or stability of the tetramer" evidence="1">
    <location>
        <position position="20"/>
    </location>
</feature>
<feature type="site" description="Selectivity filter" evidence="1">
    <location>
        <position position="43"/>
    </location>
</feature>
<feature type="site" description="Selectivity filter" evidence="1">
    <location>
        <position position="172"/>
    </location>
</feature>
<feature type="site" description="Selectivity filter" evidence="1">
    <location>
        <position position="181"/>
    </location>
</feature>
<feature type="site" description="Selectivity filter" evidence="1">
    <location>
        <position position="187"/>
    </location>
</feature>
<comment type="function">
    <text evidence="1">Channel that permits osmotically driven movement of water in both directions. It is involved in the osmoregulation and in the maintenance of cell turgor during volume expansion in rapidly growing cells. It mediates rapid entry or exit of water in response to abrupt changes in osmolarity.</text>
</comment>
<comment type="catalytic activity">
    <reaction evidence="1">
        <text>H2O(in) = H2O(out)</text>
        <dbReference type="Rhea" id="RHEA:29667"/>
        <dbReference type="ChEBI" id="CHEBI:15377"/>
    </reaction>
    <physiologicalReaction direction="left-to-right" evidence="1">
        <dbReference type="Rhea" id="RHEA:29668"/>
    </physiologicalReaction>
    <physiologicalReaction direction="right-to-left" evidence="1">
        <dbReference type="Rhea" id="RHEA:29669"/>
    </physiologicalReaction>
</comment>
<comment type="subunit">
    <text evidence="1">Homotetramer.</text>
</comment>
<comment type="subcellular location">
    <subcellularLocation>
        <location evidence="1">Cell inner membrane</location>
        <topology evidence="1">Multi-pass membrane protein</topology>
    </subcellularLocation>
</comment>
<comment type="domain">
    <text evidence="1">Aquaporins contain two tandem repeats each containing three membrane-spanning domains and a pore-forming loop with the signature motif Asn-Pro-Ala (NPA).</text>
</comment>
<comment type="similarity">
    <text evidence="1 2">Belongs to the MIP/aquaporin (TC 1.A.8) family.</text>
</comment>
<evidence type="ECO:0000255" key="1">
    <source>
        <dbReference type="HAMAP-Rule" id="MF_01146"/>
    </source>
</evidence>
<evidence type="ECO:0000305" key="2"/>
<sequence length="228" mass="23145">MLNKLSAEFFGTFWLVFGGCGSAILAAAFPELGIGFLGVALAFGLTVLTMAYAVGGISGGHFNPAVSLGLTVAGRLPAKDLIPYWVAQVLGAIAAAAILYVIASGKDGFSAGGLASNGYGELSPGGYSMMAGLLIEIILTAFFIIIILGSTSSLAPAGFAPIAIGFGLTLIHLVSIPVTNTSVNPARSTGVALFADRAALSQLWLFWVAPLVGAVIGAIIWKGLLGRD</sequence>
<accession>P0C112</accession>
<accession>Q57AQ4</accession>
<accession>Q9LA79</accession>
<proteinExistence type="inferred from homology"/>
<gene>
    <name evidence="1" type="primary">aqpZ</name>
    <name type="synonym">aqpX</name>
    <name type="ordered locus">BruAb1_1976</name>
</gene>
<keyword id="KW-0997">Cell inner membrane</keyword>
<keyword id="KW-1003">Cell membrane</keyword>
<keyword id="KW-0472">Membrane</keyword>
<keyword id="KW-0677">Repeat</keyword>
<keyword id="KW-0812">Transmembrane</keyword>
<keyword id="KW-1133">Transmembrane helix</keyword>
<keyword id="KW-0813">Transport</keyword>
<organism>
    <name type="scientific">Brucella abortus biovar 1 (strain 9-941)</name>
    <dbReference type="NCBI Taxonomy" id="262698"/>
    <lineage>
        <taxon>Bacteria</taxon>
        <taxon>Pseudomonadati</taxon>
        <taxon>Pseudomonadota</taxon>
        <taxon>Alphaproteobacteria</taxon>
        <taxon>Hyphomicrobiales</taxon>
        <taxon>Brucellaceae</taxon>
        <taxon>Brucella/Ochrobactrum group</taxon>
        <taxon>Brucella</taxon>
    </lineage>
</organism>